<comment type="function">
    <text evidence="1">Increases the formation of ribosomal termination complexes and stimulates activities of RF-1 and RF-2. It binds guanine nucleotides and has strong preference for UGA stop codons. It may interact directly with the ribosome. The stimulation of RF-1 and RF-2 is significantly reduced by GTP and GDP, but not by GMP.</text>
</comment>
<comment type="subcellular location">
    <subcellularLocation>
        <location evidence="1">Cytoplasm</location>
    </subcellularLocation>
</comment>
<comment type="similarity">
    <text evidence="1">Belongs to the TRAFAC class translation factor GTPase superfamily. Classic translation factor GTPase family. PrfC subfamily.</text>
</comment>
<evidence type="ECO:0000255" key="1">
    <source>
        <dbReference type="HAMAP-Rule" id="MF_00072"/>
    </source>
</evidence>
<proteinExistence type="inferred from homology"/>
<gene>
    <name evidence="1" type="primary">prfC</name>
    <name type="ordered locus">Ava_3298</name>
</gene>
<accession>Q3M7Y0</accession>
<sequence>MSTEIQTELHQAVELRRNFAIISHPDAGKTTLTEKLLLYGGAIHEAGAVKARRAQRKATSDWMAMEQQRGISITSTVLQFEYQNCQINLLDTPGHQDFSEDTYRTLAAADNAVMLIDVAKGLEPQTRKLFEVCKLRGLPIFTFINKLDRPGREPLELLDEIEQELGLQTYAVNWPIGMGDRFKGVFDRNKQQIHLFERSAHGSKEARDTTVELGDPRIEELLEEDLYYQLKNDLELLEGVGPELDLDLVHQGKMTPVFFGSAMTNFGVELFLKYFLNYALKPGVHISSVGEVAPTYPEFSGFVFKLQANMDPKHRDRVAFIRVCTGKFEKDMTVNHARTGKIVRLSRPQKLFAQERESIDVAYPGDVIGLNNPGVFAIGDTIYTGQKLEYEGIPYFSPELFATLRNPNPSKFKQFQKGISELREEGAVQIMYSVDEAKRDPIMAAVGQLQFEVVQFRLQNEYGVETILELLPYSVARWVDGGWEALNKVGRIFNTTTVKDSMNRPVLLFRNEWNCQQLQGDHPELKLSAIAPVFSSQTVE</sequence>
<reference key="1">
    <citation type="journal article" date="2014" name="Stand. Genomic Sci.">
        <title>Complete genome sequence of Anabaena variabilis ATCC 29413.</title>
        <authorList>
            <person name="Thiel T."/>
            <person name="Pratte B.S."/>
            <person name="Zhong J."/>
            <person name="Goodwin L."/>
            <person name="Copeland A."/>
            <person name="Lucas S."/>
            <person name="Han C."/>
            <person name="Pitluck S."/>
            <person name="Land M.L."/>
            <person name="Kyrpides N.C."/>
            <person name="Woyke T."/>
        </authorList>
    </citation>
    <scope>NUCLEOTIDE SEQUENCE [LARGE SCALE GENOMIC DNA]</scope>
    <source>
        <strain>ATCC 29413 / PCC 7937</strain>
    </source>
</reference>
<keyword id="KW-0963">Cytoplasm</keyword>
<keyword id="KW-0342">GTP-binding</keyword>
<keyword id="KW-0547">Nucleotide-binding</keyword>
<keyword id="KW-0648">Protein biosynthesis</keyword>
<dbReference type="EMBL" id="CP000117">
    <property type="protein sequence ID" value="ABA22906.1"/>
    <property type="molecule type" value="Genomic_DNA"/>
</dbReference>
<dbReference type="SMR" id="Q3M7Y0"/>
<dbReference type="STRING" id="240292.Ava_3298"/>
<dbReference type="KEGG" id="ava:Ava_3298"/>
<dbReference type="eggNOG" id="COG4108">
    <property type="taxonomic scope" value="Bacteria"/>
</dbReference>
<dbReference type="HOGENOM" id="CLU_002794_2_1_3"/>
<dbReference type="Proteomes" id="UP000002533">
    <property type="component" value="Chromosome"/>
</dbReference>
<dbReference type="GO" id="GO:0005829">
    <property type="term" value="C:cytosol"/>
    <property type="evidence" value="ECO:0007669"/>
    <property type="project" value="TreeGrafter"/>
</dbReference>
<dbReference type="GO" id="GO:0005525">
    <property type="term" value="F:GTP binding"/>
    <property type="evidence" value="ECO:0007669"/>
    <property type="project" value="UniProtKB-UniRule"/>
</dbReference>
<dbReference type="GO" id="GO:0003924">
    <property type="term" value="F:GTPase activity"/>
    <property type="evidence" value="ECO:0007669"/>
    <property type="project" value="InterPro"/>
</dbReference>
<dbReference type="GO" id="GO:0016150">
    <property type="term" value="F:translation release factor activity, codon nonspecific"/>
    <property type="evidence" value="ECO:0007669"/>
    <property type="project" value="TreeGrafter"/>
</dbReference>
<dbReference type="GO" id="GO:0016149">
    <property type="term" value="F:translation release factor activity, codon specific"/>
    <property type="evidence" value="ECO:0007669"/>
    <property type="project" value="UniProtKB-UniRule"/>
</dbReference>
<dbReference type="GO" id="GO:0006449">
    <property type="term" value="P:regulation of translational termination"/>
    <property type="evidence" value="ECO:0007669"/>
    <property type="project" value="UniProtKB-UniRule"/>
</dbReference>
<dbReference type="CDD" id="cd04169">
    <property type="entry name" value="RF3"/>
    <property type="match status" value="1"/>
</dbReference>
<dbReference type="CDD" id="cd03689">
    <property type="entry name" value="RF3_II"/>
    <property type="match status" value="1"/>
</dbReference>
<dbReference type="CDD" id="cd16259">
    <property type="entry name" value="RF3_III"/>
    <property type="match status" value="1"/>
</dbReference>
<dbReference type="FunFam" id="3.30.70.3280:FF:000001">
    <property type="entry name" value="Peptide chain release factor 3"/>
    <property type="match status" value="1"/>
</dbReference>
<dbReference type="FunFam" id="3.40.50.300:FF:000542">
    <property type="entry name" value="Peptide chain release factor 3"/>
    <property type="match status" value="1"/>
</dbReference>
<dbReference type="Gene3D" id="3.40.50.300">
    <property type="entry name" value="P-loop containing nucleotide triphosphate hydrolases"/>
    <property type="match status" value="1"/>
</dbReference>
<dbReference type="Gene3D" id="3.30.70.3280">
    <property type="entry name" value="Peptide chain release factor 3, domain III"/>
    <property type="match status" value="1"/>
</dbReference>
<dbReference type="Gene3D" id="2.40.30.10">
    <property type="entry name" value="Translation factors"/>
    <property type="match status" value="1"/>
</dbReference>
<dbReference type="HAMAP" id="MF_00072">
    <property type="entry name" value="Rel_fac_3"/>
    <property type="match status" value="1"/>
</dbReference>
<dbReference type="InterPro" id="IPR053905">
    <property type="entry name" value="EF-G-like_DII"/>
</dbReference>
<dbReference type="InterPro" id="IPR035647">
    <property type="entry name" value="EFG_III/V"/>
</dbReference>
<dbReference type="InterPro" id="IPR031157">
    <property type="entry name" value="G_TR_CS"/>
</dbReference>
<dbReference type="InterPro" id="IPR027417">
    <property type="entry name" value="P-loop_NTPase"/>
</dbReference>
<dbReference type="InterPro" id="IPR004548">
    <property type="entry name" value="PrfC"/>
</dbReference>
<dbReference type="InterPro" id="IPR032090">
    <property type="entry name" value="RF3_C"/>
</dbReference>
<dbReference type="InterPro" id="IPR038467">
    <property type="entry name" value="RF3_dom_3_sf"/>
</dbReference>
<dbReference type="InterPro" id="IPR041732">
    <property type="entry name" value="RF3_GTP-bd"/>
</dbReference>
<dbReference type="InterPro" id="IPR005225">
    <property type="entry name" value="Small_GTP-bd"/>
</dbReference>
<dbReference type="InterPro" id="IPR000795">
    <property type="entry name" value="T_Tr_GTP-bd_dom"/>
</dbReference>
<dbReference type="InterPro" id="IPR009000">
    <property type="entry name" value="Transl_B-barrel_sf"/>
</dbReference>
<dbReference type="NCBIfam" id="TIGR00503">
    <property type="entry name" value="prfC"/>
    <property type="match status" value="1"/>
</dbReference>
<dbReference type="NCBIfam" id="NF001964">
    <property type="entry name" value="PRK00741.1"/>
    <property type="match status" value="1"/>
</dbReference>
<dbReference type="NCBIfam" id="TIGR00231">
    <property type="entry name" value="small_GTP"/>
    <property type="match status" value="1"/>
</dbReference>
<dbReference type="PANTHER" id="PTHR43556">
    <property type="entry name" value="PEPTIDE CHAIN RELEASE FACTOR RF3"/>
    <property type="match status" value="1"/>
</dbReference>
<dbReference type="PANTHER" id="PTHR43556:SF2">
    <property type="entry name" value="PEPTIDE CHAIN RELEASE FACTOR RF3"/>
    <property type="match status" value="1"/>
</dbReference>
<dbReference type="Pfam" id="PF22042">
    <property type="entry name" value="EF-G_D2"/>
    <property type="match status" value="1"/>
</dbReference>
<dbReference type="Pfam" id="PF00009">
    <property type="entry name" value="GTP_EFTU"/>
    <property type="match status" value="1"/>
</dbReference>
<dbReference type="Pfam" id="PF16658">
    <property type="entry name" value="RF3_C"/>
    <property type="match status" value="1"/>
</dbReference>
<dbReference type="PRINTS" id="PR00315">
    <property type="entry name" value="ELONGATNFCT"/>
</dbReference>
<dbReference type="SUPFAM" id="SSF54980">
    <property type="entry name" value="EF-G C-terminal domain-like"/>
    <property type="match status" value="1"/>
</dbReference>
<dbReference type="SUPFAM" id="SSF52540">
    <property type="entry name" value="P-loop containing nucleoside triphosphate hydrolases"/>
    <property type="match status" value="1"/>
</dbReference>
<dbReference type="SUPFAM" id="SSF50447">
    <property type="entry name" value="Translation proteins"/>
    <property type="match status" value="1"/>
</dbReference>
<dbReference type="PROSITE" id="PS00301">
    <property type="entry name" value="G_TR_1"/>
    <property type="match status" value="1"/>
</dbReference>
<dbReference type="PROSITE" id="PS51722">
    <property type="entry name" value="G_TR_2"/>
    <property type="match status" value="1"/>
</dbReference>
<protein>
    <recommendedName>
        <fullName evidence="1">Peptide chain release factor 3</fullName>
        <shortName evidence="1">RF-3</shortName>
    </recommendedName>
</protein>
<organism>
    <name type="scientific">Trichormus variabilis (strain ATCC 29413 / PCC 7937)</name>
    <name type="common">Anabaena variabilis</name>
    <dbReference type="NCBI Taxonomy" id="240292"/>
    <lineage>
        <taxon>Bacteria</taxon>
        <taxon>Bacillati</taxon>
        <taxon>Cyanobacteriota</taxon>
        <taxon>Cyanophyceae</taxon>
        <taxon>Nostocales</taxon>
        <taxon>Nostocaceae</taxon>
        <taxon>Trichormus</taxon>
    </lineage>
</organism>
<name>RF3_TRIV2</name>
<feature type="chain" id="PRO_0000242168" description="Peptide chain release factor 3">
    <location>
        <begin position="1"/>
        <end position="540"/>
    </location>
</feature>
<feature type="domain" description="tr-type G">
    <location>
        <begin position="14"/>
        <end position="283"/>
    </location>
</feature>
<feature type="binding site" evidence="1">
    <location>
        <begin position="23"/>
        <end position="30"/>
    </location>
    <ligand>
        <name>GTP</name>
        <dbReference type="ChEBI" id="CHEBI:37565"/>
    </ligand>
</feature>
<feature type="binding site" evidence="1">
    <location>
        <begin position="91"/>
        <end position="95"/>
    </location>
    <ligand>
        <name>GTP</name>
        <dbReference type="ChEBI" id="CHEBI:37565"/>
    </ligand>
</feature>
<feature type="binding site" evidence="1">
    <location>
        <begin position="145"/>
        <end position="148"/>
    </location>
    <ligand>
        <name>GTP</name>
        <dbReference type="ChEBI" id="CHEBI:37565"/>
    </ligand>
</feature>